<keyword id="KW-0002">3D-structure</keyword>
<keyword id="KW-0007">Acetylation</keyword>
<keyword id="KW-0013">ADP-ribosylation</keyword>
<keyword id="KW-0963">Cytoplasm</keyword>
<keyword id="KW-0903">Direct protein sequencing</keyword>
<keyword id="KW-1017">Isopeptide bond</keyword>
<keyword id="KW-0597">Phosphoprotein</keyword>
<keyword id="KW-1267">Proteomics identification</keyword>
<keyword id="KW-1185">Reference proteome</keyword>
<keyword id="KW-0687">Ribonucleoprotein</keyword>
<keyword id="KW-0689">Ribosomal protein</keyword>
<keyword id="KW-0832">Ubl conjugation</keyword>
<dbReference type="EMBL" id="M94314">
    <property type="protein sequence ID" value="AAC28251.1"/>
    <property type="molecule type" value="mRNA"/>
</dbReference>
<dbReference type="EMBL" id="AB061828">
    <property type="protein sequence ID" value="BAB79466.1"/>
    <property type="molecule type" value="Genomic_DNA"/>
</dbReference>
<dbReference type="EMBL" id="CR456729">
    <property type="protein sequence ID" value="CAG33010.1"/>
    <property type="molecule type" value="mRNA"/>
</dbReference>
<dbReference type="EMBL" id="AK311992">
    <property type="protein sequence ID" value="BAG34930.1"/>
    <property type="molecule type" value="mRNA"/>
</dbReference>
<dbReference type="EMBL" id="CH471052">
    <property type="protein sequence ID" value="EAW79780.1"/>
    <property type="molecule type" value="Genomic_DNA"/>
</dbReference>
<dbReference type="EMBL" id="BC000690">
    <property type="protein sequence ID" value="AAH00690.1"/>
    <property type="molecule type" value="mRNA"/>
</dbReference>
<dbReference type="EMBL" id="BC070193">
    <property type="protein sequence ID" value="AAH70193.1"/>
    <property type="molecule type" value="mRNA"/>
</dbReference>
<dbReference type="EMBL" id="AB007177">
    <property type="protein sequence ID" value="BAA25836.1"/>
    <property type="molecule type" value="Genomic_DNA"/>
</dbReference>
<dbReference type="CCDS" id="CCDS33809.1"/>
<dbReference type="PIR" id="JN0549">
    <property type="entry name" value="JN0549"/>
</dbReference>
<dbReference type="RefSeq" id="NP_000977.1">
    <property type="nucleotide sequence ID" value="NM_000986.4"/>
</dbReference>
<dbReference type="PDB" id="4UG0">
    <property type="method" value="EM"/>
    <property type="chains" value="LW=1-157"/>
</dbReference>
<dbReference type="PDB" id="4V6X">
    <property type="method" value="EM"/>
    <property type="resolution" value="5.00 A"/>
    <property type="chains" value="CW=1-157"/>
</dbReference>
<dbReference type="PDB" id="5A2Q">
    <property type="method" value="EM"/>
    <property type="resolution" value="3.90 A"/>
    <property type="chains" value="w=79-126"/>
</dbReference>
<dbReference type="PDB" id="5AJ0">
    <property type="method" value="EM"/>
    <property type="resolution" value="3.50 A"/>
    <property type="chains" value="AW=1-157"/>
</dbReference>
<dbReference type="PDB" id="5LKS">
    <property type="method" value="EM"/>
    <property type="resolution" value="3.60 A"/>
    <property type="chains" value="LW=1-157"/>
</dbReference>
<dbReference type="PDB" id="5T2C">
    <property type="method" value="EM"/>
    <property type="resolution" value="3.60 A"/>
    <property type="chains" value="Q=1-157"/>
</dbReference>
<dbReference type="PDB" id="6IP5">
    <property type="method" value="EM"/>
    <property type="resolution" value="3.90 A"/>
    <property type="chains" value="2Q=1-157"/>
</dbReference>
<dbReference type="PDB" id="6IP6">
    <property type="method" value="EM"/>
    <property type="resolution" value="4.50 A"/>
    <property type="chains" value="2Q=1-157"/>
</dbReference>
<dbReference type="PDB" id="6IP8">
    <property type="method" value="EM"/>
    <property type="resolution" value="3.90 A"/>
    <property type="chains" value="2Q=1-157"/>
</dbReference>
<dbReference type="PDB" id="6LQM">
    <property type="method" value="EM"/>
    <property type="resolution" value="3.09 A"/>
    <property type="chains" value="f=1-157"/>
</dbReference>
<dbReference type="PDB" id="6LSR">
    <property type="method" value="EM"/>
    <property type="resolution" value="3.13 A"/>
    <property type="chains" value="f=1-157"/>
</dbReference>
<dbReference type="PDB" id="6OLE">
    <property type="method" value="EM"/>
    <property type="resolution" value="3.10 A"/>
    <property type="chains" value="X=2-62"/>
</dbReference>
<dbReference type="PDB" id="6OLF">
    <property type="method" value="EM"/>
    <property type="resolution" value="3.90 A"/>
    <property type="chains" value="X=2-122"/>
</dbReference>
<dbReference type="PDB" id="6OLG">
    <property type="method" value="EM"/>
    <property type="resolution" value="3.40 A"/>
    <property type="chains" value="AW=2-122"/>
</dbReference>
<dbReference type="PDB" id="6OLI">
    <property type="method" value="EM"/>
    <property type="resolution" value="3.50 A"/>
    <property type="chains" value="X=2-62"/>
</dbReference>
<dbReference type="PDB" id="6OLZ">
    <property type="method" value="EM"/>
    <property type="resolution" value="3.90 A"/>
    <property type="chains" value="AW=2-122"/>
</dbReference>
<dbReference type="PDB" id="6OM0">
    <property type="method" value="EM"/>
    <property type="resolution" value="3.10 A"/>
    <property type="chains" value="X=2-62"/>
</dbReference>
<dbReference type="PDB" id="6OM7">
    <property type="method" value="EM"/>
    <property type="resolution" value="3.70 A"/>
    <property type="chains" value="X=2-122"/>
</dbReference>
<dbReference type="PDB" id="6QZP">
    <property type="method" value="EM"/>
    <property type="resolution" value="2.90 A"/>
    <property type="chains" value="LW=1-124"/>
</dbReference>
<dbReference type="PDB" id="6W6L">
    <property type="method" value="EM"/>
    <property type="resolution" value="3.84 A"/>
    <property type="chains" value="X=1-157"/>
</dbReference>
<dbReference type="PDB" id="6XA1">
    <property type="method" value="EM"/>
    <property type="resolution" value="2.80 A"/>
    <property type="chains" value="LW=1-124"/>
</dbReference>
<dbReference type="PDB" id="6Y0G">
    <property type="method" value="EM"/>
    <property type="resolution" value="3.20 A"/>
    <property type="chains" value="LW=1-157"/>
</dbReference>
<dbReference type="PDB" id="6Y2L">
    <property type="method" value="EM"/>
    <property type="resolution" value="3.00 A"/>
    <property type="chains" value="LW=1-157"/>
</dbReference>
<dbReference type="PDB" id="6Y57">
    <property type="method" value="EM"/>
    <property type="resolution" value="3.50 A"/>
    <property type="chains" value="LW=1-157"/>
</dbReference>
<dbReference type="PDB" id="6Y6X">
    <property type="method" value="EM"/>
    <property type="resolution" value="2.80 A"/>
    <property type="chains" value="LW=1-124"/>
</dbReference>
<dbReference type="PDB" id="6Z6L">
    <property type="method" value="EM"/>
    <property type="resolution" value="3.00 A"/>
    <property type="chains" value="LW=1-157"/>
</dbReference>
<dbReference type="PDB" id="6Z6M">
    <property type="method" value="EM"/>
    <property type="resolution" value="3.10 A"/>
    <property type="chains" value="LW=1-157"/>
</dbReference>
<dbReference type="PDB" id="6Z6N">
    <property type="method" value="EM"/>
    <property type="resolution" value="2.90 A"/>
    <property type="chains" value="LW=1-157"/>
</dbReference>
<dbReference type="PDB" id="6ZM7">
    <property type="method" value="EM"/>
    <property type="resolution" value="2.70 A"/>
    <property type="chains" value="LW=1-157"/>
</dbReference>
<dbReference type="PDB" id="6ZME">
    <property type="method" value="EM"/>
    <property type="resolution" value="3.00 A"/>
    <property type="chains" value="LW=1-157"/>
</dbReference>
<dbReference type="PDB" id="6ZMI">
    <property type="method" value="EM"/>
    <property type="resolution" value="2.60 A"/>
    <property type="chains" value="LW=1-157"/>
</dbReference>
<dbReference type="PDB" id="6ZMO">
    <property type="method" value="EM"/>
    <property type="resolution" value="3.10 A"/>
    <property type="chains" value="LW=1-157"/>
</dbReference>
<dbReference type="PDB" id="7BHP">
    <property type="method" value="EM"/>
    <property type="resolution" value="3.30 A"/>
    <property type="chains" value="LW=1-157"/>
</dbReference>
<dbReference type="PDB" id="7F5S">
    <property type="method" value="EM"/>
    <property type="resolution" value="2.72 A"/>
    <property type="chains" value="LW=1-157"/>
</dbReference>
<dbReference type="PDB" id="7OW7">
    <property type="method" value="EM"/>
    <property type="resolution" value="2.20 A"/>
    <property type="chains" value="u=1-157"/>
</dbReference>
<dbReference type="PDB" id="7XNX">
    <property type="method" value="EM"/>
    <property type="resolution" value="2.70 A"/>
    <property type="chains" value="LW=1-157"/>
</dbReference>
<dbReference type="PDB" id="7XNY">
    <property type="method" value="EM"/>
    <property type="resolution" value="2.50 A"/>
    <property type="chains" value="LW=1-157"/>
</dbReference>
<dbReference type="PDB" id="8A3D">
    <property type="method" value="EM"/>
    <property type="resolution" value="1.67 A"/>
    <property type="chains" value="Q=1-157"/>
</dbReference>
<dbReference type="PDB" id="8G5Y">
    <property type="method" value="EM"/>
    <property type="resolution" value="2.29 A"/>
    <property type="chains" value="LW=1-157"/>
</dbReference>
<dbReference type="PDB" id="8G60">
    <property type="method" value="EM"/>
    <property type="resolution" value="2.54 A"/>
    <property type="chains" value="LW=1-157"/>
</dbReference>
<dbReference type="PDB" id="8G61">
    <property type="method" value="EM"/>
    <property type="resolution" value="2.94 A"/>
    <property type="chains" value="LW=1-157"/>
</dbReference>
<dbReference type="PDB" id="8G6J">
    <property type="method" value="EM"/>
    <property type="resolution" value="2.80 A"/>
    <property type="chains" value="LW=1-157"/>
</dbReference>
<dbReference type="PDB" id="8GLP">
    <property type="method" value="EM"/>
    <property type="resolution" value="1.67 A"/>
    <property type="chains" value="LW=1-157"/>
</dbReference>
<dbReference type="PDB" id="8IFD">
    <property type="method" value="EM"/>
    <property type="resolution" value="2.59 A"/>
    <property type="chains" value="2Q=1-157"/>
</dbReference>
<dbReference type="PDB" id="8IFE">
    <property type="method" value="EM"/>
    <property type="resolution" value="2.57 A"/>
    <property type="chains" value="2Q=1-157"/>
</dbReference>
<dbReference type="PDB" id="8JDJ">
    <property type="method" value="EM"/>
    <property type="resolution" value="2.50 A"/>
    <property type="chains" value="b=1-157"/>
</dbReference>
<dbReference type="PDB" id="8JDK">
    <property type="method" value="EM"/>
    <property type="resolution" value="2.26 A"/>
    <property type="chains" value="b=1-157"/>
</dbReference>
<dbReference type="PDB" id="8JDL">
    <property type="method" value="EM"/>
    <property type="resolution" value="2.42 A"/>
    <property type="chains" value="b=1-157"/>
</dbReference>
<dbReference type="PDB" id="8JDM">
    <property type="method" value="EM"/>
    <property type="resolution" value="2.67 A"/>
    <property type="chains" value="b=1-157"/>
</dbReference>
<dbReference type="PDB" id="8K2C">
    <property type="method" value="EM"/>
    <property type="resolution" value="2.40 A"/>
    <property type="chains" value="LW=1-157"/>
</dbReference>
<dbReference type="PDB" id="8OHD">
    <property type="method" value="EM"/>
    <property type="resolution" value="3.10 A"/>
    <property type="chains" value="LW=1-157"/>
</dbReference>
<dbReference type="PDB" id="8OJ0">
    <property type="method" value="EM"/>
    <property type="resolution" value="3.30 A"/>
    <property type="chains" value="LW=1-157"/>
</dbReference>
<dbReference type="PDB" id="8OJ5">
    <property type="method" value="EM"/>
    <property type="resolution" value="2.90 A"/>
    <property type="chains" value="LW=1-157"/>
</dbReference>
<dbReference type="PDB" id="8OJ8">
    <property type="method" value="EM"/>
    <property type="resolution" value="3.30 A"/>
    <property type="chains" value="LW=1-157"/>
</dbReference>
<dbReference type="PDB" id="8QFD">
    <property type="method" value="EM"/>
    <property type="resolution" value="2.20 A"/>
    <property type="chains" value="W=1-157"/>
</dbReference>
<dbReference type="PDB" id="8QOI">
    <property type="method" value="EM"/>
    <property type="resolution" value="1.90 A"/>
    <property type="chains" value="LW=1-157"/>
</dbReference>
<dbReference type="PDB" id="8QYX">
    <property type="method" value="EM"/>
    <property type="resolution" value="1.78 A"/>
    <property type="chains" value="Q1=1-157"/>
</dbReference>
<dbReference type="PDB" id="8UKB">
    <property type="method" value="EM"/>
    <property type="resolution" value="3.05 A"/>
    <property type="chains" value="LW=1-124"/>
</dbReference>
<dbReference type="PDB" id="8XSX">
    <property type="method" value="EM"/>
    <property type="resolution" value="2.40 A"/>
    <property type="chains" value="LW=1-157"/>
</dbReference>
<dbReference type="PDB" id="8XSY">
    <property type="method" value="EM"/>
    <property type="resolution" value="3.00 A"/>
    <property type="chains" value="LW=1-157"/>
</dbReference>
<dbReference type="PDB" id="8XSZ">
    <property type="method" value="EM"/>
    <property type="resolution" value="3.20 A"/>
    <property type="chains" value="LW=1-157"/>
</dbReference>
<dbReference type="PDB" id="8Y0W">
    <property type="method" value="EM"/>
    <property type="resolution" value="3.40 A"/>
    <property type="chains" value="LW=1-157"/>
</dbReference>
<dbReference type="PDB" id="8Y0X">
    <property type="method" value="EM"/>
    <property type="resolution" value="3.30 A"/>
    <property type="chains" value="LW=1-157"/>
</dbReference>
<dbReference type="PDB" id="8YOO">
    <property type="method" value="EM"/>
    <property type="resolution" value="2.00 A"/>
    <property type="chains" value="LW=1-157"/>
</dbReference>
<dbReference type="PDB" id="8YOP">
    <property type="method" value="EM"/>
    <property type="resolution" value="2.20 A"/>
    <property type="chains" value="LW=1-157"/>
</dbReference>
<dbReference type="PDB" id="9C3H">
    <property type="method" value="EM"/>
    <property type="resolution" value="2.00 A"/>
    <property type="chains" value="LW=1-157"/>
</dbReference>
<dbReference type="PDB" id="9G8M">
    <property type="method" value="EM"/>
    <property type="resolution" value="3.30 A"/>
    <property type="chains" value="LW=1-157"/>
</dbReference>
<dbReference type="PDB" id="9GMO">
    <property type="method" value="EM"/>
    <property type="resolution" value="2.59 A"/>
    <property type="chains" value="Q=1-157"/>
</dbReference>
<dbReference type="PDBsum" id="4UG0"/>
<dbReference type="PDBsum" id="4V6X"/>
<dbReference type="PDBsum" id="5A2Q"/>
<dbReference type="PDBsum" id="5AJ0"/>
<dbReference type="PDBsum" id="5LKS"/>
<dbReference type="PDBsum" id="5T2C"/>
<dbReference type="PDBsum" id="6IP5"/>
<dbReference type="PDBsum" id="6IP6"/>
<dbReference type="PDBsum" id="6IP8"/>
<dbReference type="PDBsum" id="6LQM"/>
<dbReference type="PDBsum" id="6LSR"/>
<dbReference type="PDBsum" id="6OLE"/>
<dbReference type="PDBsum" id="6OLF"/>
<dbReference type="PDBsum" id="6OLG"/>
<dbReference type="PDBsum" id="6OLI"/>
<dbReference type="PDBsum" id="6OLZ"/>
<dbReference type="PDBsum" id="6OM0"/>
<dbReference type="PDBsum" id="6OM7"/>
<dbReference type="PDBsum" id="6QZP"/>
<dbReference type="PDBsum" id="6W6L"/>
<dbReference type="PDBsum" id="6XA1"/>
<dbReference type="PDBsum" id="6Y0G"/>
<dbReference type="PDBsum" id="6Y2L"/>
<dbReference type="PDBsum" id="6Y57"/>
<dbReference type="PDBsum" id="6Y6X"/>
<dbReference type="PDBsum" id="6Z6L"/>
<dbReference type="PDBsum" id="6Z6M"/>
<dbReference type="PDBsum" id="6Z6N"/>
<dbReference type="PDBsum" id="6ZM7"/>
<dbReference type="PDBsum" id="6ZME"/>
<dbReference type="PDBsum" id="6ZMI"/>
<dbReference type="PDBsum" id="6ZMO"/>
<dbReference type="PDBsum" id="7BHP"/>
<dbReference type="PDBsum" id="7F5S"/>
<dbReference type="PDBsum" id="7OW7"/>
<dbReference type="PDBsum" id="7XNX"/>
<dbReference type="PDBsum" id="7XNY"/>
<dbReference type="PDBsum" id="8A3D"/>
<dbReference type="PDBsum" id="8G5Y"/>
<dbReference type="PDBsum" id="8G60"/>
<dbReference type="PDBsum" id="8G61"/>
<dbReference type="PDBsum" id="8G6J"/>
<dbReference type="PDBsum" id="8GLP"/>
<dbReference type="PDBsum" id="8IFD"/>
<dbReference type="PDBsum" id="8IFE"/>
<dbReference type="PDBsum" id="8JDJ"/>
<dbReference type="PDBsum" id="8JDK"/>
<dbReference type="PDBsum" id="8JDL"/>
<dbReference type="PDBsum" id="8JDM"/>
<dbReference type="PDBsum" id="8K2C"/>
<dbReference type="PDBsum" id="8OHD"/>
<dbReference type="PDBsum" id="8OJ0"/>
<dbReference type="PDBsum" id="8OJ5"/>
<dbReference type="PDBsum" id="8OJ8"/>
<dbReference type="PDBsum" id="8QFD"/>
<dbReference type="PDBsum" id="8QOI"/>
<dbReference type="PDBsum" id="8QYX"/>
<dbReference type="PDBsum" id="8UKB"/>
<dbReference type="PDBsum" id="8XSX"/>
<dbReference type="PDBsum" id="8XSY"/>
<dbReference type="PDBsum" id="8XSZ"/>
<dbReference type="PDBsum" id="8Y0W"/>
<dbReference type="PDBsum" id="8Y0X"/>
<dbReference type="PDBsum" id="8YOO"/>
<dbReference type="PDBsum" id="8YOP"/>
<dbReference type="PDBsum" id="9C3H"/>
<dbReference type="PDBsum" id="9G8M"/>
<dbReference type="PDBsum" id="9GMO"/>
<dbReference type="EMDB" id="EMD-0948"/>
<dbReference type="EMDB" id="EMD-0963"/>
<dbReference type="EMDB" id="EMD-10668"/>
<dbReference type="EMDB" id="EMD-10674"/>
<dbReference type="EMDB" id="EMD-10690"/>
<dbReference type="EMDB" id="EMD-10709"/>
<dbReference type="EMDB" id="EMD-11098"/>
<dbReference type="EMDB" id="EMD-11099"/>
<dbReference type="EMDB" id="EMD-11100"/>
<dbReference type="EMDB" id="EMD-11288"/>
<dbReference type="EMDB" id="EMD-11289"/>
<dbReference type="EMDB" id="EMD-11292"/>
<dbReference type="EMDB" id="EMD-11299"/>
<dbReference type="EMDB" id="EMD-12189"/>
<dbReference type="EMDB" id="EMD-13094"/>
<dbReference type="EMDB" id="EMD-15113"/>
<dbReference type="EMDB" id="EMD-16880"/>
<dbReference type="EMDB" id="EMD-16902"/>
<dbReference type="EMDB" id="EMD-16905"/>
<dbReference type="EMDB" id="EMD-16908"/>
<dbReference type="EMDB" id="EMD-18382"/>
<dbReference type="EMDB" id="EMD-18539"/>
<dbReference type="EMDB" id="EMD-18765"/>
<dbReference type="EMDB" id="EMD-29757"/>
<dbReference type="EMDB" id="EMD-29758"/>
<dbReference type="EMDB" id="EMD-29759"/>
<dbReference type="EMDB" id="EMD-29760"/>
<dbReference type="EMDB" id="EMD-29771"/>
<dbReference type="EMDB" id="EMD-31465"/>
<dbReference type="EMDB" id="EMD-33329"/>
<dbReference type="EMDB" id="EMD-33330"/>
<dbReference type="EMDB" id="EMD-35413"/>
<dbReference type="EMDB" id="EMD-35414"/>
<dbReference type="EMDB" id="EMD-36178"/>
<dbReference type="EMDB" id="EMD-36179"/>
<dbReference type="EMDB" id="EMD-36180"/>
<dbReference type="EMDB" id="EMD-36181"/>
<dbReference type="EMDB" id="EMD-36838"/>
<dbReference type="EMDB" id="EMD-38629"/>
<dbReference type="EMDB" id="EMD-38630"/>
<dbReference type="EMDB" id="EMD-38631"/>
<dbReference type="EMDB" id="EMD-3883"/>
<dbReference type="EMDB" id="EMD-39455"/>
<dbReference type="EMDB" id="EMD-39456"/>
<dbReference type="EMDB" id="EMD-40205"/>
<dbReference type="EMDB" id="EMD-4070"/>
<dbReference type="EMDB" id="EMD-45170"/>
<dbReference type="EMDB" id="EMD-51132"/>
<dbReference type="EMDB" id="EMD-51452"/>
<dbReference type="EMDB" id="EMD-9701"/>
<dbReference type="EMDB" id="EMD-9702"/>
<dbReference type="EMDB" id="EMD-9703"/>
<dbReference type="SMR" id="P83731"/>
<dbReference type="BioGRID" id="112071">
    <property type="interactions" value="410"/>
</dbReference>
<dbReference type="ComplexPortal" id="CPX-5183">
    <property type="entry name" value="60S cytosolic large ribosomal subunit"/>
</dbReference>
<dbReference type="ComplexPortal" id="CPX-7664">
    <property type="entry name" value="60S cytosolic large ribosomal subunit, testis-specific variant"/>
</dbReference>
<dbReference type="ComplexPortal" id="CPX-7665">
    <property type="entry name" value="60S cytosolic large ribosomal subunit, striated muscle variant"/>
</dbReference>
<dbReference type="CORUM" id="P83731"/>
<dbReference type="FunCoup" id="P83731">
    <property type="interactions" value="2168"/>
</dbReference>
<dbReference type="IntAct" id="P83731">
    <property type="interactions" value="145"/>
</dbReference>
<dbReference type="MINT" id="P83731"/>
<dbReference type="STRING" id="9606.ENSP00000377640"/>
<dbReference type="GlyGen" id="P83731">
    <property type="glycosylation" value="1 site, 1 O-linked glycan (1 site)"/>
</dbReference>
<dbReference type="iPTMnet" id="P83731"/>
<dbReference type="MetOSite" id="P83731"/>
<dbReference type="PhosphoSitePlus" id="P83731"/>
<dbReference type="SwissPalm" id="P83731"/>
<dbReference type="BioMuta" id="RPL24"/>
<dbReference type="DMDM" id="41393532"/>
<dbReference type="jPOST" id="P83731"/>
<dbReference type="MassIVE" id="P83731"/>
<dbReference type="PaxDb" id="9606-ENSP00000377640"/>
<dbReference type="PeptideAtlas" id="P83731"/>
<dbReference type="PRIDE" id="P83731"/>
<dbReference type="ProteomicsDB" id="57738"/>
<dbReference type="Pumba" id="P83731"/>
<dbReference type="TopDownProteomics" id="P83731"/>
<dbReference type="Antibodypedia" id="32294">
    <property type="antibodies" value="79 antibodies from 24 providers"/>
</dbReference>
<dbReference type="DNASU" id="6152"/>
<dbReference type="Ensembl" id="ENST00000394077.8">
    <property type="protein sequence ID" value="ENSP00000377640.3"/>
    <property type="gene ID" value="ENSG00000114391.14"/>
</dbReference>
<dbReference type="GeneID" id="6152"/>
<dbReference type="KEGG" id="hsa:6152"/>
<dbReference type="MANE-Select" id="ENST00000394077.8">
    <property type="protein sequence ID" value="ENSP00000377640.3"/>
    <property type="RefSeq nucleotide sequence ID" value="NM_000986.4"/>
    <property type="RefSeq protein sequence ID" value="NP_000977.1"/>
</dbReference>
<dbReference type="AGR" id="HGNC:10325"/>
<dbReference type="CTD" id="6152"/>
<dbReference type="DisGeNET" id="6152"/>
<dbReference type="GeneCards" id="RPL24"/>
<dbReference type="HGNC" id="HGNC:10325">
    <property type="gene designation" value="RPL24"/>
</dbReference>
<dbReference type="HPA" id="ENSG00000114391">
    <property type="expression patterns" value="Low tissue specificity"/>
</dbReference>
<dbReference type="MIM" id="604180">
    <property type="type" value="gene"/>
</dbReference>
<dbReference type="neXtProt" id="NX_P83731"/>
<dbReference type="OpenTargets" id="ENSG00000114391"/>
<dbReference type="PharmGKB" id="PA34701"/>
<dbReference type="VEuPathDB" id="HostDB:ENSG00000114391"/>
<dbReference type="eggNOG" id="KOG1722">
    <property type="taxonomic scope" value="Eukaryota"/>
</dbReference>
<dbReference type="GeneTree" id="ENSGT00950000183105"/>
<dbReference type="HOGENOM" id="CLU_106411_1_0_1"/>
<dbReference type="InParanoid" id="P83731"/>
<dbReference type="OMA" id="PGHGKKM"/>
<dbReference type="OrthoDB" id="1727108at2759"/>
<dbReference type="PAN-GO" id="P83731">
    <property type="GO annotations" value="4 GO annotations based on evolutionary models"/>
</dbReference>
<dbReference type="PhylomeDB" id="P83731"/>
<dbReference type="TreeFam" id="TF312933"/>
<dbReference type="PathwayCommons" id="P83731"/>
<dbReference type="Reactome" id="R-HSA-156827">
    <property type="pathway name" value="L13a-mediated translational silencing of Ceruloplasmin expression"/>
</dbReference>
<dbReference type="Reactome" id="R-HSA-156902">
    <property type="pathway name" value="Peptide chain elongation"/>
</dbReference>
<dbReference type="Reactome" id="R-HSA-1799339">
    <property type="pathway name" value="SRP-dependent cotranslational protein targeting to membrane"/>
</dbReference>
<dbReference type="Reactome" id="R-HSA-192823">
    <property type="pathway name" value="Viral mRNA Translation"/>
</dbReference>
<dbReference type="Reactome" id="R-HSA-2408557">
    <property type="pathway name" value="Selenocysteine synthesis"/>
</dbReference>
<dbReference type="Reactome" id="R-HSA-6791226">
    <property type="pathway name" value="Major pathway of rRNA processing in the nucleolus and cytosol"/>
</dbReference>
<dbReference type="Reactome" id="R-HSA-72689">
    <property type="pathway name" value="Formation of a pool of free 40S subunits"/>
</dbReference>
<dbReference type="Reactome" id="R-HSA-72706">
    <property type="pathway name" value="GTP hydrolysis and joining of the 60S ribosomal subunit"/>
</dbReference>
<dbReference type="Reactome" id="R-HSA-72764">
    <property type="pathway name" value="Eukaryotic Translation Termination"/>
</dbReference>
<dbReference type="Reactome" id="R-HSA-9010553">
    <property type="pathway name" value="Regulation of expression of SLITs and ROBOs"/>
</dbReference>
<dbReference type="Reactome" id="R-HSA-9633012">
    <property type="pathway name" value="Response of EIF2AK4 (GCN2) to amino acid deficiency"/>
</dbReference>
<dbReference type="Reactome" id="R-HSA-975956">
    <property type="pathway name" value="Nonsense Mediated Decay (NMD) independent of the Exon Junction Complex (EJC)"/>
</dbReference>
<dbReference type="Reactome" id="R-HSA-975957">
    <property type="pathway name" value="Nonsense Mediated Decay (NMD) enhanced by the Exon Junction Complex (EJC)"/>
</dbReference>
<dbReference type="SignaLink" id="P83731"/>
<dbReference type="SIGNOR" id="P83731"/>
<dbReference type="BioGRID-ORCS" id="6152">
    <property type="hits" value="738 hits in 1083 CRISPR screens"/>
</dbReference>
<dbReference type="CD-CODE" id="91857CE7">
    <property type="entry name" value="Nucleolus"/>
</dbReference>
<dbReference type="CD-CODE" id="FB4E32DD">
    <property type="entry name" value="Presynaptic clusters and postsynaptic densities"/>
</dbReference>
<dbReference type="ChiTaRS" id="RPL24">
    <property type="organism name" value="human"/>
</dbReference>
<dbReference type="EvolutionaryTrace" id="P83731"/>
<dbReference type="GeneWiki" id="RPL24"/>
<dbReference type="GenomeRNAi" id="6152"/>
<dbReference type="Pharos" id="P83731">
    <property type="development level" value="Tbio"/>
</dbReference>
<dbReference type="PRO" id="PR:P83731"/>
<dbReference type="Proteomes" id="UP000005640">
    <property type="component" value="Chromosome 3"/>
</dbReference>
<dbReference type="RNAct" id="P83731">
    <property type="molecule type" value="protein"/>
</dbReference>
<dbReference type="Bgee" id="ENSG00000114391">
    <property type="expression patterns" value="Expressed in calcaneal tendon and 99 other cell types or tissues"/>
</dbReference>
<dbReference type="ExpressionAtlas" id="P83731">
    <property type="expression patterns" value="baseline and differential"/>
</dbReference>
<dbReference type="GO" id="GO:0005737">
    <property type="term" value="C:cytoplasm"/>
    <property type="evidence" value="ECO:0000314"/>
    <property type="project" value="BHF-UCL"/>
</dbReference>
<dbReference type="GO" id="GO:0005829">
    <property type="term" value="C:cytosol"/>
    <property type="evidence" value="ECO:0000314"/>
    <property type="project" value="HPA"/>
</dbReference>
<dbReference type="GO" id="GO:0022625">
    <property type="term" value="C:cytosolic large ribosomal subunit"/>
    <property type="evidence" value="ECO:0000314"/>
    <property type="project" value="UniProtKB"/>
</dbReference>
<dbReference type="GO" id="GO:0022626">
    <property type="term" value="C:cytosolic ribosome"/>
    <property type="evidence" value="ECO:0000314"/>
    <property type="project" value="FlyBase"/>
</dbReference>
<dbReference type="GO" id="GO:0005783">
    <property type="term" value="C:endoplasmic reticulum"/>
    <property type="evidence" value="ECO:0000314"/>
    <property type="project" value="HPA"/>
</dbReference>
<dbReference type="GO" id="GO:0070062">
    <property type="term" value="C:extracellular exosome"/>
    <property type="evidence" value="ECO:0007005"/>
    <property type="project" value="UniProtKB"/>
</dbReference>
<dbReference type="GO" id="GO:0016020">
    <property type="term" value="C:membrane"/>
    <property type="evidence" value="ECO:0007005"/>
    <property type="project" value="UniProtKB"/>
</dbReference>
<dbReference type="GO" id="GO:0045202">
    <property type="term" value="C:synapse"/>
    <property type="evidence" value="ECO:0007669"/>
    <property type="project" value="Ensembl"/>
</dbReference>
<dbReference type="GO" id="GO:0045296">
    <property type="term" value="F:cadherin binding"/>
    <property type="evidence" value="ECO:0007005"/>
    <property type="project" value="BHF-UCL"/>
</dbReference>
<dbReference type="GO" id="GO:0003729">
    <property type="term" value="F:mRNA binding"/>
    <property type="evidence" value="ECO:0000318"/>
    <property type="project" value="GO_Central"/>
</dbReference>
<dbReference type="GO" id="GO:0003723">
    <property type="term" value="F:RNA binding"/>
    <property type="evidence" value="ECO:0007005"/>
    <property type="project" value="UniProtKB"/>
</dbReference>
<dbReference type="GO" id="GO:0003735">
    <property type="term" value="F:structural constituent of ribosome"/>
    <property type="evidence" value="ECO:0000314"/>
    <property type="project" value="UniProtKB"/>
</dbReference>
<dbReference type="GO" id="GO:0002181">
    <property type="term" value="P:cytoplasmic translation"/>
    <property type="evidence" value="ECO:0000314"/>
    <property type="project" value="UniProtKB"/>
</dbReference>
<dbReference type="GO" id="GO:0010458">
    <property type="term" value="P:exit from mitosis"/>
    <property type="evidence" value="ECO:0007669"/>
    <property type="project" value="Ensembl"/>
</dbReference>
<dbReference type="GO" id="GO:0021554">
    <property type="term" value="P:optic nerve development"/>
    <property type="evidence" value="ECO:0007669"/>
    <property type="project" value="Ensembl"/>
</dbReference>
<dbReference type="GO" id="GO:0060041">
    <property type="term" value="P:retina development in camera-type eye"/>
    <property type="evidence" value="ECO:0007669"/>
    <property type="project" value="Ensembl"/>
</dbReference>
<dbReference type="GO" id="GO:0031290">
    <property type="term" value="P:retinal ganglion cell axon guidance"/>
    <property type="evidence" value="ECO:0007669"/>
    <property type="project" value="Ensembl"/>
</dbReference>
<dbReference type="GO" id="GO:0000027">
    <property type="term" value="P:ribosomal large subunit assembly"/>
    <property type="evidence" value="ECO:0007669"/>
    <property type="project" value="Ensembl"/>
</dbReference>
<dbReference type="GO" id="GO:0006412">
    <property type="term" value="P:translation"/>
    <property type="evidence" value="ECO:0000304"/>
    <property type="project" value="ProtInc"/>
</dbReference>
<dbReference type="CDD" id="cd00472">
    <property type="entry name" value="Ribosomal_L24e_L24"/>
    <property type="match status" value="1"/>
</dbReference>
<dbReference type="DisProt" id="DP01935"/>
<dbReference type="FunFam" id="2.30.170.20:FF:000004">
    <property type="entry name" value="60S ribosomal protein l24"/>
    <property type="match status" value="1"/>
</dbReference>
<dbReference type="Gene3D" id="6.10.250.1270">
    <property type="match status" value="1"/>
</dbReference>
<dbReference type="Gene3D" id="2.30.170.20">
    <property type="entry name" value="Ribosomal protein L24e"/>
    <property type="match status" value="1"/>
</dbReference>
<dbReference type="InterPro" id="IPR038630">
    <property type="entry name" value="L24e/L24_sf"/>
</dbReference>
<dbReference type="InterPro" id="IPR056366">
    <property type="entry name" value="Ribosomal_eL24"/>
</dbReference>
<dbReference type="InterPro" id="IPR000988">
    <property type="entry name" value="Ribosomal_eL24-rel_N"/>
</dbReference>
<dbReference type="InterPro" id="IPR023442">
    <property type="entry name" value="Ribosomal_eL24_CS"/>
</dbReference>
<dbReference type="InterPro" id="IPR011017">
    <property type="entry name" value="TRASH_dom"/>
</dbReference>
<dbReference type="PANTHER" id="PTHR10792">
    <property type="entry name" value="60S RIBOSOMAL PROTEIN L24"/>
    <property type="match status" value="1"/>
</dbReference>
<dbReference type="PANTHER" id="PTHR10792:SF1">
    <property type="entry name" value="RIBOSOMAL PROTEIN L24"/>
    <property type="match status" value="1"/>
</dbReference>
<dbReference type="Pfam" id="PF01246">
    <property type="entry name" value="Ribosomal_L24e"/>
    <property type="match status" value="1"/>
</dbReference>
<dbReference type="SMART" id="SM00746">
    <property type="entry name" value="TRASH"/>
    <property type="match status" value="1"/>
</dbReference>
<dbReference type="SUPFAM" id="SSF57716">
    <property type="entry name" value="Glucocorticoid receptor-like (DNA-binding domain)"/>
    <property type="match status" value="1"/>
</dbReference>
<dbReference type="PROSITE" id="PS01073">
    <property type="entry name" value="RIBOSOMAL_L24E"/>
    <property type="match status" value="1"/>
</dbReference>
<proteinExistence type="evidence at protein level"/>
<organism>
    <name type="scientific">Homo sapiens</name>
    <name type="common">Human</name>
    <dbReference type="NCBI Taxonomy" id="9606"/>
    <lineage>
        <taxon>Eukaryota</taxon>
        <taxon>Metazoa</taxon>
        <taxon>Chordata</taxon>
        <taxon>Craniata</taxon>
        <taxon>Vertebrata</taxon>
        <taxon>Euteleostomi</taxon>
        <taxon>Mammalia</taxon>
        <taxon>Eutheria</taxon>
        <taxon>Euarchontoglires</taxon>
        <taxon>Primates</taxon>
        <taxon>Haplorrhini</taxon>
        <taxon>Catarrhini</taxon>
        <taxon>Hominidae</taxon>
        <taxon>Homo</taxon>
    </lineage>
</organism>
<protein>
    <recommendedName>
        <fullName evidence="6">Large ribosomal subunit protein eL24</fullName>
    </recommendedName>
    <alternativeName>
        <fullName>60S ribosomal protein L24</fullName>
    </alternativeName>
    <alternativeName>
        <fullName>60S ribosomal protein L30</fullName>
    </alternativeName>
</protein>
<feature type="chain" id="PRO_0000136867" description="Large ribosomal subunit protein eL24">
    <location>
        <begin position="1"/>
        <end position="157"/>
    </location>
</feature>
<feature type="region of interest" description="Disordered" evidence="2">
    <location>
        <begin position="106"/>
        <end position="157"/>
    </location>
</feature>
<feature type="compositionally biased region" description="Basic and acidic residues" evidence="2">
    <location>
        <begin position="106"/>
        <end position="117"/>
    </location>
</feature>
<feature type="compositionally biased region" description="Low complexity" evidence="2">
    <location>
        <begin position="123"/>
        <end position="140"/>
    </location>
</feature>
<feature type="modified residue" description="ADP-ribosyl glutamic acid" evidence="5">
    <location>
        <position position="4"/>
    </location>
</feature>
<feature type="modified residue" description="N6-acetyllysine; alternate" evidence="13">
    <location>
        <position position="27"/>
    </location>
</feature>
<feature type="modified residue" description="N6-acetyllysine" evidence="13">
    <location>
        <position position="77"/>
    </location>
</feature>
<feature type="modified residue" description="Phosphothreonine" evidence="10 11 14 15">
    <location>
        <position position="83"/>
    </location>
</feature>
<feature type="modified residue" description="Phosphoserine" evidence="11 12 14 15">
    <location>
        <position position="86"/>
    </location>
</feature>
<feature type="modified residue" description="N6-acetyllysine" evidence="13">
    <location>
        <position position="93"/>
    </location>
</feature>
<feature type="modified residue" description="N6-succinyllysine" evidence="1">
    <location>
        <position position="131"/>
    </location>
</feature>
<feature type="modified residue" description="Phosphoserine" evidence="14">
    <location>
        <position position="149"/>
    </location>
</feature>
<feature type="cross-link" description="Glycyl lysine isopeptide (Lys-Gly) (interchain with G-Cter in SUMO2)" evidence="16">
    <location>
        <position position="2"/>
    </location>
</feature>
<feature type="cross-link" description="Glycyl lysine isopeptide (Lys-Gly) (interchain with G-Cter in SUMO2); alternate" evidence="16">
    <location>
        <position position="27"/>
    </location>
</feature>
<feature type="cross-link" description="Glycyl lysine isopeptide (Lys-Gly) (interchain with G-Cter in SUMO2)" evidence="16">
    <location>
        <position position="35"/>
    </location>
</feature>
<feature type="cross-link" description="Glycyl lysine isopeptide (Lys-Gly) (interchain with G-Cter in SUMO2)" evidence="16">
    <location>
        <position position="147"/>
    </location>
</feature>
<feature type="mutagenesis site" description="Abolished mono-ADP-ribosylation by PARP16, leading to increased protein synthesis." evidence="5">
    <original>E</original>
    <variation>Q</variation>
    <location>
        <position position="4"/>
    </location>
</feature>
<reference key="1">
    <citation type="journal article" date="1993" name="Gene">
        <title>Characterization of cDNA clones encoding the human homologue of Saccharomyces cerevisiae ribosomal protein L30.</title>
        <authorList>
            <person name="Johnson K.R."/>
        </authorList>
    </citation>
    <scope>NUCLEOTIDE SEQUENCE [MRNA]</scope>
</reference>
<reference key="2">
    <citation type="journal article" date="2002" name="Genome Res.">
        <title>The human ribosomal protein genes: sequencing and comparative analysis of 73 genes.</title>
        <authorList>
            <person name="Yoshihama M."/>
            <person name="Uechi T."/>
            <person name="Asakawa S."/>
            <person name="Kawasaki K."/>
            <person name="Kato S."/>
            <person name="Higa S."/>
            <person name="Maeda N."/>
            <person name="Minoshima S."/>
            <person name="Tanaka T."/>
            <person name="Shimizu N."/>
            <person name="Kenmochi N."/>
        </authorList>
    </citation>
    <scope>NUCLEOTIDE SEQUENCE [GENOMIC DNA]</scope>
</reference>
<reference key="3">
    <citation type="submission" date="2004-06" db="EMBL/GenBank/DDBJ databases">
        <title>Cloning of human full open reading frames in Gateway(TM) system entry vector (pDONR201).</title>
        <authorList>
            <person name="Ebert L."/>
            <person name="Schick M."/>
            <person name="Neubert P."/>
            <person name="Schatten R."/>
            <person name="Henze S."/>
            <person name="Korn B."/>
        </authorList>
    </citation>
    <scope>NUCLEOTIDE SEQUENCE [LARGE SCALE MRNA]</scope>
</reference>
<reference key="4">
    <citation type="journal article" date="2004" name="Nat. Genet.">
        <title>Complete sequencing and characterization of 21,243 full-length human cDNAs.</title>
        <authorList>
            <person name="Ota T."/>
            <person name="Suzuki Y."/>
            <person name="Nishikawa T."/>
            <person name="Otsuki T."/>
            <person name="Sugiyama T."/>
            <person name="Irie R."/>
            <person name="Wakamatsu A."/>
            <person name="Hayashi K."/>
            <person name="Sato H."/>
            <person name="Nagai K."/>
            <person name="Kimura K."/>
            <person name="Makita H."/>
            <person name="Sekine M."/>
            <person name="Obayashi M."/>
            <person name="Nishi T."/>
            <person name="Shibahara T."/>
            <person name="Tanaka T."/>
            <person name="Ishii S."/>
            <person name="Yamamoto J."/>
            <person name="Saito K."/>
            <person name="Kawai Y."/>
            <person name="Isono Y."/>
            <person name="Nakamura Y."/>
            <person name="Nagahari K."/>
            <person name="Murakami K."/>
            <person name="Yasuda T."/>
            <person name="Iwayanagi T."/>
            <person name="Wagatsuma M."/>
            <person name="Shiratori A."/>
            <person name="Sudo H."/>
            <person name="Hosoiri T."/>
            <person name="Kaku Y."/>
            <person name="Kodaira H."/>
            <person name="Kondo H."/>
            <person name="Sugawara M."/>
            <person name="Takahashi M."/>
            <person name="Kanda K."/>
            <person name="Yokoi T."/>
            <person name="Furuya T."/>
            <person name="Kikkawa E."/>
            <person name="Omura Y."/>
            <person name="Abe K."/>
            <person name="Kamihara K."/>
            <person name="Katsuta N."/>
            <person name="Sato K."/>
            <person name="Tanikawa M."/>
            <person name="Yamazaki M."/>
            <person name="Ninomiya K."/>
            <person name="Ishibashi T."/>
            <person name="Yamashita H."/>
            <person name="Murakawa K."/>
            <person name="Fujimori K."/>
            <person name="Tanai H."/>
            <person name="Kimata M."/>
            <person name="Watanabe M."/>
            <person name="Hiraoka S."/>
            <person name="Chiba Y."/>
            <person name="Ishida S."/>
            <person name="Ono Y."/>
            <person name="Takiguchi S."/>
            <person name="Watanabe S."/>
            <person name="Yosida M."/>
            <person name="Hotuta T."/>
            <person name="Kusano J."/>
            <person name="Kanehori K."/>
            <person name="Takahashi-Fujii A."/>
            <person name="Hara H."/>
            <person name="Tanase T.-O."/>
            <person name="Nomura Y."/>
            <person name="Togiya S."/>
            <person name="Komai F."/>
            <person name="Hara R."/>
            <person name="Takeuchi K."/>
            <person name="Arita M."/>
            <person name="Imose N."/>
            <person name="Musashino K."/>
            <person name="Yuuki H."/>
            <person name="Oshima A."/>
            <person name="Sasaki N."/>
            <person name="Aotsuka S."/>
            <person name="Yoshikawa Y."/>
            <person name="Matsunawa H."/>
            <person name="Ichihara T."/>
            <person name="Shiohata N."/>
            <person name="Sano S."/>
            <person name="Moriya S."/>
            <person name="Momiyama H."/>
            <person name="Satoh N."/>
            <person name="Takami S."/>
            <person name="Terashima Y."/>
            <person name="Suzuki O."/>
            <person name="Nakagawa S."/>
            <person name="Senoh A."/>
            <person name="Mizoguchi H."/>
            <person name="Goto Y."/>
            <person name="Shimizu F."/>
            <person name="Wakebe H."/>
            <person name="Hishigaki H."/>
            <person name="Watanabe T."/>
            <person name="Sugiyama A."/>
            <person name="Takemoto M."/>
            <person name="Kawakami B."/>
            <person name="Yamazaki M."/>
            <person name="Watanabe K."/>
            <person name="Kumagai A."/>
            <person name="Itakura S."/>
            <person name="Fukuzumi Y."/>
            <person name="Fujimori Y."/>
            <person name="Komiyama M."/>
            <person name="Tashiro H."/>
            <person name="Tanigami A."/>
            <person name="Fujiwara T."/>
            <person name="Ono T."/>
            <person name="Yamada K."/>
            <person name="Fujii Y."/>
            <person name="Ozaki K."/>
            <person name="Hirao M."/>
            <person name="Ohmori Y."/>
            <person name="Kawabata A."/>
            <person name="Hikiji T."/>
            <person name="Kobatake N."/>
            <person name="Inagaki H."/>
            <person name="Ikema Y."/>
            <person name="Okamoto S."/>
            <person name="Okitani R."/>
            <person name="Kawakami T."/>
            <person name="Noguchi S."/>
            <person name="Itoh T."/>
            <person name="Shigeta K."/>
            <person name="Senba T."/>
            <person name="Matsumura K."/>
            <person name="Nakajima Y."/>
            <person name="Mizuno T."/>
            <person name="Morinaga M."/>
            <person name="Sasaki M."/>
            <person name="Togashi T."/>
            <person name="Oyama M."/>
            <person name="Hata H."/>
            <person name="Watanabe M."/>
            <person name="Komatsu T."/>
            <person name="Mizushima-Sugano J."/>
            <person name="Satoh T."/>
            <person name="Shirai Y."/>
            <person name="Takahashi Y."/>
            <person name="Nakagawa K."/>
            <person name="Okumura K."/>
            <person name="Nagase T."/>
            <person name="Nomura N."/>
            <person name="Kikuchi H."/>
            <person name="Masuho Y."/>
            <person name="Yamashita R."/>
            <person name="Nakai K."/>
            <person name="Yada T."/>
            <person name="Nakamura Y."/>
            <person name="Ohara O."/>
            <person name="Isogai T."/>
            <person name="Sugano S."/>
        </authorList>
    </citation>
    <scope>NUCLEOTIDE SEQUENCE [LARGE SCALE MRNA]</scope>
    <source>
        <tissue>Thymus</tissue>
    </source>
</reference>
<reference key="5">
    <citation type="submission" date="2005-09" db="EMBL/GenBank/DDBJ databases">
        <authorList>
            <person name="Mural R.J."/>
            <person name="Istrail S."/>
            <person name="Sutton G.G."/>
            <person name="Florea L."/>
            <person name="Halpern A.L."/>
            <person name="Mobarry C.M."/>
            <person name="Lippert R."/>
            <person name="Walenz B."/>
            <person name="Shatkay H."/>
            <person name="Dew I."/>
            <person name="Miller J.R."/>
            <person name="Flanigan M.J."/>
            <person name="Edwards N.J."/>
            <person name="Bolanos R."/>
            <person name="Fasulo D."/>
            <person name="Halldorsson B.V."/>
            <person name="Hannenhalli S."/>
            <person name="Turner R."/>
            <person name="Yooseph S."/>
            <person name="Lu F."/>
            <person name="Nusskern D.R."/>
            <person name="Shue B.C."/>
            <person name="Zheng X.H."/>
            <person name="Zhong F."/>
            <person name="Delcher A.L."/>
            <person name="Huson D.H."/>
            <person name="Kravitz S.A."/>
            <person name="Mouchard L."/>
            <person name="Reinert K."/>
            <person name="Remington K.A."/>
            <person name="Clark A.G."/>
            <person name="Waterman M.S."/>
            <person name="Eichler E.E."/>
            <person name="Adams M.D."/>
            <person name="Hunkapiller M.W."/>
            <person name="Myers E.W."/>
            <person name="Venter J.C."/>
        </authorList>
    </citation>
    <scope>NUCLEOTIDE SEQUENCE [LARGE SCALE GENOMIC DNA]</scope>
</reference>
<reference key="6">
    <citation type="journal article" date="2004" name="Genome Res.">
        <title>The status, quality, and expansion of the NIH full-length cDNA project: the Mammalian Gene Collection (MGC).</title>
        <authorList>
            <consortium name="The MGC Project Team"/>
        </authorList>
    </citation>
    <scope>NUCLEOTIDE SEQUENCE [LARGE SCALE MRNA]</scope>
    <source>
        <tissue>Colon</tissue>
    </source>
</reference>
<reference key="7">
    <citation type="submission" date="2010-01" db="UniProtKB">
        <authorList>
            <person name="Bienvenut W.V."/>
            <person name="Bilsland A.E."/>
            <person name="Keith W.N."/>
        </authorList>
    </citation>
    <scope>PROTEIN SEQUENCE OF 1-12; 28-44; 48-56 AND 81-93</scope>
    <scope>IDENTIFICATION BY MASS SPECTROMETRY</scope>
    <source>
        <tissue>Colon carcinoma</tissue>
    </source>
</reference>
<reference key="8">
    <citation type="journal article" date="1998" name="Genome Res.">
        <title>A map of 75 human ribosomal protein genes.</title>
        <authorList>
            <person name="Kenmochi N."/>
            <person name="Kawaguchi T."/>
            <person name="Rozen S."/>
            <person name="Davis E."/>
            <person name="Goodman N."/>
            <person name="Hudson T.J."/>
            <person name="Tanaka T."/>
            <person name="Page D.C."/>
        </authorList>
    </citation>
    <scope>NUCLEOTIDE SEQUENCE [GENOMIC DNA] OF 132-157</scope>
</reference>
<reference key="9">
    <citation type="journal article" date="2003" name="Nature">
        <title>Proteomic characterization of the human centrosome by protein correlation profiling.</title>
        <authorList>
            <person name="Andersen J.S."/>
            <person name="Wilkinson C.J."/>
            <person name="Mayor T."/>
            <person name="Mortensen P."/>
            <person name="Nigg E.A."/>
            <person name="Mann M."/>
        </authorList>
    </citation>
    <scope>IDENTIFICATION BY MASS SPECTROMETRY</scope>
    <source>
        <tissue>Lymphoblast</tissue>
    </source>
</reference>
<reference key="10">
    <citation type="journal article" date="2006" name="Cell">
        <title>Global, in vivo, and site-specific phosphorylation dynamics in signaling networks.</title>
        <authorList>
            <person name="Olsen J.V."/>
            <person name="Blagoev B."/>
            <person name="Gnad F."/>
            <person name="Macek B."/>
            <person name="Kumar C."/>
            <person name="Mortensen P."/>
            <person name="Mann M."/>
        </authorList>
    </citation>
    <scope>PHOSPHORYLATION [LARGE SCALE ANALYSIS] AT THR-83</scope>
    <scope>IDENTIFICATION BY MASS SPECTROMETRY [LARGE SCALE ANALYSIS]</scope>
    <source>
        <tissue>Cervix carcinoma</tissue>
    </source>
</reference>
<reference key="11">
    <citation type="journal article" date="2008" name="Proc. Natl. Acad. Sci. U.S.A.">
        <title>A quantitative atlas of mitotic phosphorylation.</title>
        <authorList>
            <person name="Dephoure N."/>
            <person name="Zhou C."/>
            <person name="Villen J."/>
            <person name="Beausoleil S.A."/>
            <person name="Bakalarski C.E."/>
            <person name="Elledge S.J."/>
            <person name="Gygi S.P."/>
        </authorList>
    </citation>
    <scope>PHOSPHORYLATION [LARGE SCALE ANALYSIS] AT THR-83 AND SER-86</scope>
    <scope>IDENTIFICATION BY MASS SPECTROMETRY [LARGE SCALE ANALYSIS]</scope>
    <source>
        <tissue>Cervix carcinoma</tissue>
    </source>
</reference>
<reference key="12">
    <citation type="journal article" date="2009" name="Mol. Cell. Proteomics">
        <title>Large-scale proteomics analysis of the human kinome.</title>
        <authorList>
            <person name="Oppermann F.S."/>
            <person name="Gnad F."/>
            <person name="Olsen J.V."/>
            <person name="Hornberger R."/>
            <person name="Greff Z."/>
            <person name="Keri G."/>
            <person name="Mann M."/>
            <person name="Daub H."/>
        </authorList>
    </citation>
    <scope>PHOSPHORYLATION [LARGE SCALE ANALYSIS] AT SER-86</scope>
    <scope>IDENTIFICATION BY MASS SPECTROMETRY [LARGE SCALE ANALYSIS]</scope>
</reference>
<reference key="13">
    <citation type="journal article" date="2009" name="Science">
        <title>Lysine acetylation targets protein complexes and co-regulates major cellular functions.</title>
        <authorList>
            <person name="Choudhary C."/>
            <person name="Kumar C."/>
            <person name="Gnad F."/>
            <person name="Nielsen M.L."/>
            <person name="Rehman M."/>
            <person name="Walther T.C."/>
            <person name="Olsen J.V."/>
            <person name="Mann M."/>
        </authorList>
    </citation>
    <scope>ACETYLATION [LARGE SCALE ANALYSIS] AT LYS-27; LYS-77 AND LYS-93</scope>
    <scope>IDENTIFICATION BY MASS SPECTROMETRY [LARGE SCALE ANALYSIS]</scope>
</reference>
<reference key="14">
    <citation type="journal article" date="2011" name="BMC Syst. Biol.">
        <title>Initial characterization of the human central proteome.</title>
        <authorList>
            <person name="Burkard T.R."/>
            <person name="Planyavsky M."/>
            <person name="Kaupe I."/>
            <person name="Breitwieser F.P."/>
            <person name="Buerckstuemmer T."/>
            <person name="Bennett K.L."/>
            <person name="Superti-Furga G."/>
            <person name="Colinge J."/>
        </authorList>
    </citation>
    <scope>IDENTIFICATION BY MASS SPECTROMETRY [LARGE SCALE ANALYSIS]</scope>
</reference>
<reference key="15">
    <citation type="journal article" date="2013" name="J. Proteome Res.">
        <title>Toward a comprehensive characterization of a human cancer cell phosphoproteome.</title>
        <authorList>
            <person name="Zhou H."/>
            <person name="Di Palma S."/>
            <person name="Preisinger C."/>
            <person name="Peng M."/>
            <person name="Polat A.N."/>
            <person name="Heck A.J."/>
            <person name="Mohammed S."/>
        </authorList>
    </citation>
    <scope>PHOSPHORYLATION [LARGE SCALE ANALYSIS] AT THR-83; SER-86 AND SER-149</scope>
    <scope>IDENTIFICATION BY MASS SPECTROMETRY [LARGE SCALE ANALYSIS]</scope>
    <source>
        <tissue>Cervix carcinoma</tissue>
        <tissue>Erythroleukemia</tissue>
    </source>
</reference>
<reference key="16">
    <citation type="journal article" date="2014" name="Curr. Opin. Struct. Biol.">
        <title>A new system for naming ribosomal proteins.</title>
        <authorList>
            <person name="Ban N."/>
            <person name="Beckmann R."/>
            <person name="Cate J.H.D."/>
            <person name="Dinman J.D."/>
            <person name="Dragon F."/>
            <person name="Ellis S.R."/>
            <person name="Lafontaine D.L.J."/>
            <person name="Lindahl L."/>
            <person name="Liljas A."/>
            <person name="Lipton J.M."/>
            <person name="McAlear M.A."/>
            <person name="Moore P.B."/>
            <person name="Noller H.F."/>
            <person name="Ortega J."/>
            <person name="Panse V.G."/>
            <person name="Ramakrishnan V."/>
            <person name="Spahn C.M.T."/>
            <person name="Steitz T.A."/>
            <person name="Tchorzewski M."/>
            <person name="Tollervey D."/>
            <person name="Warren A.J."/>
            <person name="Williamson J.R."/>
            <person name="Wilson D."/>
            <person name="Yonath A."/>
            <person name="Yusupov M."/>
        </authorList>
    </citation>
    <scope>NOMENCLATURE</scope>
</reference>
<reference key="17">
    <citation type="journal article" date="2014" name="J. Proteomics">
        <title>An enzyme assisted RP-RPLC approach for in-depth analysis of human liver phosphoproteome.</title>
        <authorList>
            <person name="Bian Y."/>
            <person name="Song C."/>
            <person name="Cheng K."/>
            <person name="Dong M."/>
            <person name="Wang F."/>
            <person name="Huang J."/>
            <person name="Sun D."/>
            <person name="Wang L."/>
            <person name="Ye M."/>
            <person name="Zou H."/>
        </authorList>
    </citation>
    <scope>PHOSPHORYLATION [LARGE SCALE ANALYSIS] AT THR-83 AND SER-86</scope>
    <scope>IDENTIFICATION BY MASS SPECTROMETRY [LARGE SCALE ANALYSIS]</scope>
    <source>
        <tissue>Liver</tissue>
    </source>
</reference>
<reference key="18">
    <citation type="journal article" date="2015" name="Proteomics">
        <title>N-terminome analysis of the human mitochondrial proteome.</title>
        <authorList>
            <person name="Vaca Jacome A.S."/>
            <person name="Rabilloud T."/>
            <person name="Schaeffer-Reiss C."/>
            <person name="Rompais M."/>
            <person name="Ayoub D."/>
            <person name="Lane L."/>
            <person name="Bairoch A."/>
            <person name="Van Dorsselaer A."/>
            <person name="Carapito C."/>
        </authorList>
    </citation>
    <scope>IDENTIFICATION BY MASS SPECTROMETRY [LARGE SCALE ANALYSIS]</scope>
</reference>
<reference key="19">
    <citation type="journal article" date="2017" name="Nat. Struct. Mol. Biol.">
        <title>Site-specific mapping of the human SUMO proteome reveals co-modification with phosphorylation.</title>
        <authorList>
            <person name="Hendriks I.A."/>
            <person name="Lyon D."/>
            <person name="Young C."/>
            <person name="Jensen L.J."/>
            <person name="Vertegaal A.C."/>
            <person name="Nielsen M.L."/>
        </authorList>
    </citation>
    <scope>SUMOYLATION [LARGE SCALE ANALYSIS] AT LYS-2; LYS-27; LYS-35 AND LYS-147</scope>
    <scope>IDENTIFICATION BY MASS SPECTROMETRY [LARGE SCALE ANALYSIS]</scope>
</reference>
<reference key="20">
    <citation type="journal article" date="2021" name="Cell">
        <title>Ribosome ADP-ribosylation inhibits translation and maintains proteostasis in cancers.</title>
        <authorList>
            <person name="Challa S."/>
            <person name="Khulpateea B.R."/>
            <person name="Nandu T."/>
            <person name="Camacho C.V."/>
            <person name="Ryu K.W."/>
            <person name="Chen H."/>
            <person name="Peng Y."/>
            <person name="Lea J.S."/>
            <person name="Kraus W.L."/>
        </authorList>
    </citation>
    <scope>ADP-RIBOSYLATION AT GLU-4</scope>
    <scope>MUTAGENESIS OF GLU-4</scope>
</reference>
<reference key="21">
    <citation type="journal article" date="2013" name="Nature">
        <title>Structures of the human and Drosophila 80S ribosome.</title>
        <authorList>
            <person name="Anger A.M."/>
            <person name="Armache J.P."/>
            <person name="Berninghausen O."/>
            <person name="Habeck M."/>
            <person name="Subklewe M."/>
            <person name="Wilson D.N."/>
            <person name="Beckmann R."/>
        </authorList>
    </citation>
    <scope>STRUCTURE BY ELECTRON MICROSCOPY (5.0 ANGSTROMS)</scope>
    <scope>FUNCTION</scope>
    <scope>SUBUNIT</scope>
    <scope>SUBCELLULAR LOCATION</scope>
</reference>
<reference evidence="8 9" key="22">
    <citation type="journal article" date="2020" name="Nat. Commun.">
        <title>Structural snapshots of human pre-60S ribosomal particles before and after nuclear export.</title>
        <authorList>
            <person name="Liang X."/>
            <person name="Zuo M.Q."/>
            <person name="Zhang Y."/>
            <person name="Li N."/>
            <person name="Ma C."/>
            <person name="Dong M.Q."/>
            <person name="Gao N."/>
        </authorList>
    </citation>
    <scope>STRUCTURE BY ELECTRON MICROSCOPY (3.09 ANGSTROMS)</scope>
    <scope>FUNCTION</scope>
    <scope>SUBUNIT</scope>
</reference>
<gene>
    <name type="primary">RPL24</name>
</gene>
<accession>P83731</accession>
<accession>B2R4Y3</accession>
<accession>P38663</accession>
<accession>Q6IBS3</accession>
<comment type="function">
    <text evidence="3 4">Component of the large ribosomal subunit. The ribosome is a large ribonucleoprotein complex responsible for the synthesis of proteins in the cell.</text>
</comment>
<comment type="subunit">
    <text evidence="3 4">Component of the large ribosomal subunit.</text>
</comment>
<comment type="subcellular location">
    <subcellularLocation>
        <location evidence="3">Cytoplasm</location>
    </subcellularLocation>
</comment>
<comment type="PTM">
    <text evidence="5">Mono-ADP-ribosylation at Glu-4 by PARP16 inhibits polysome assembly and mRNA loading, thereby inhibiting protein translation.</text>
</comment>
<comment type="similarity">
    <text evidence="7">Belongs to the eukaryotic ribosomal protein eL24 family.</text>
</comment>
<name>RL24_HUMAN</name>
<sequence>MKVELCSFSGYKIYPGHGRRYARTDGKVFQFLNAKCESAFLSKRNPRQINWTVLYRRKHKKGQSEEIQKKRTRRAVKFQRAITGASLADIMAKRNQKPEVRKAQREQAIRAAKEAKKAKQASKKTAMAAAKAPTKAAPKQKIVKPVKVSAPRVGGKR</sequence>
<evidence type="ECO:0000250" key="1">
    <source>
        <dbReference type="UniProtKB" id="Q8BP67"/>
    </source>
</evidence>
<evidence type="ECO:0000256" key="2">
    <source>
        <dbReference type="SAM" id="MobiDB-lite"/>
    </source>
</evidence>
<evidence type="ECO:0000269" key="3">
    <source>
    </source>
</evidence>
<evidence type="ECO:0000269" key="4">
    <source>
    </source>
</evidence>
<evidence type="ECO:0000269" key="5">
    <source>
    </source>
</evidence>
<evidence type="ECO:0000303" key="6">
    <source>
    </source>
</evidence>
<evidence type="ECO:0000305" key="7"/>
<evidence type="ECO:0007744" key="8">
    <source>
        <dbReference type="PDB" id="6LQM"/>
    </source>
</evidence>
<evidence type="ECO:0007744" key="9">
    <source>
        <dbReference type="PDB" id="6LSR"/>
    </source>
</evidence>
<evidence type="ECO:0007744" key="10">
    <source>
    </source>
</evidence>
<evidence type="ECO:0007744" key="11">
    <source>
    </source>
</evidence>
<evidence type="ECO:0007744" key="12">
    <source>
    </source>
</evidence>
<evidence type="ECO:0007744" key="13">
    <source>
    </source>
</evidence>
<evidence type="ECO:0007744" key="14">
    <source>
    </source>
</evidence>
<evidence type="ECO:0007744" key="15">
    <source>
    </source>
</evidence>
<evidence type="ECO:0007744" key="16">
    <source>
    </source>
</evidence>